<organism>
    <name type="scientific">Halobacterium salinarum (strain ATCC 700922 / JCM 11081 / NRC-1)</name>
    <name type="common">Halobacterium halobium</name>
    <dbReference type="NCBI Taxonomy" id="64091"/>
    <lineage>
        <taxon>Archaea</taxon>
        <taxon>Methanobacteriati</taxon>
        <taxon>Methanobacteriota</taxon>
        <taxon>Stenosarchaea group</taxon>
        <taxon>Halobacteria</taxon>
        <taxon>Halobacteriales</taxon>
        <taxon>Halobacteriaceae</taxon>
        <taxon>Halobacterium</taxon>
        <taxon>Halobacterium salinarum NRC-34001</taxon>
    </lineage>
</organism>
<proteinExistence type="evidence at protein level"/>
<protein>
    <recommendedName>
        <fullName evidence="9">Gas vesicle protein J2</fullName>
        <shortName evidence="9">GvpJ2</shortName>
    </recommendedName>
</protein>
<sequence>MSDPKPTRSQGDLAETLELLLDKGVVVNADIAVSVGDTELLGVELRAAIASFETAAEYGLDFPTGTDMERVTAAAGVDADDSKSVLERPDPPTTEGSE</sequence>
<comment type="function">
    <text evidence="1 4 5">A minor component of the gas vesicle (PubMed:21158390). Proteins GvpF to GvpM might be involved in nucleating gas vesicle formation (By similarity). Gas vesicles are hollow, gas filled proteinaceous nanostructures found in several microbial planktonic microorganisms. They allow positioning of halobacteria at the optimal depth for growth in the poorly aerated, shallow brine pools of their habitat (PubMed:33711860).</text>
</comment>
<comment type="function">
    <text evidence="7">Expression of 2 c-vac DNA fragments containing 2 divergently transcribed regions (gvpE-gvpF-gvpG-gvpH-gvpI-gvpJ-gvpK-gvpL-gvpM and gvpA-gvpC-gvpN-gvpO) allows H.volcanii to produce gas vesicles.</text>
</comment>
<comment type="subunit">
    <text evidence="1">GvpF to GvpM interact with each other in vitro, and may form multi-subunit complex(es). Interacts with GvpA.</text>
</comment>
<comment type="subcellular location">
    <subcellularLocation>
        <location evidence="4">Gas vesicle</location>
    </subcellularLocation>
</comment>
<comment type="induction">
    <text evidence="5 6">In PHH4 (a deletion of the p-vac locus) transcribed in all growth phases, maximal expression in mid-stationary phase. An unstable 6kb transcript able to cover gvpD-gvpE-gvpF-gvpG-gvpH-gvpI-gvpJ-gvpK-gvpL-gvpM is detected, as well as smaller transcripts (PubMed:8763925). Gas vesicles appear earlier when grown in static culture, possibly due to O(2)-limitation (PubMed:33711860).</text>
</comment>
<comment type="miscellaneous">
    <text evidence="3 6">Encoded in a 14-gene locus called c-vac which produces cylindrical gas vesicles only in the stationary growth phase.</text>
</comment>
<comment type="similarity">
    <text evidence="10">Belongs to the gas vesicle GvpA family.</text>
</comment>
<comment type="caution">
    <text evidence="4">The protein sequence for residues 47-58 could come from either GvpJ1 or GvpJ2; the sequence for residues 84-98 can only come from GvpJ2.</text>
</comment>
<dbReference type="EMBL" id="X64730">
    <property type="protein sequence ID" value="CAA45987.1"/>
    <property type="molecule type" value="Genomic_DNA"/>
</dbReference>
<dbReference type="EMBL" id="X94688">
    <property type="protein sequence ID" value="CAA64349.1"/>
    <property type="molecule type" value="Genomic_DNA"/>
</dbReference>
<dbReference type="EMBL" id="AE004438">
    <property type="protein sequence ID" value="AAG20888.1"/>
    <property type="molecule type" value="Genomic_DNA"/>
</dbReference>
<dbReference type="SMR" id="P33956"/>
<dbReference type="KEGG" id="hal:VNG_6232G"/>
<dbReference type="PATRIC" id="fig|64091.14.peg.2236"/>
<dbReference type="HOGENOM" id="CLU_126378_1_1_2"/>
<dbReference type="InParanoid" id="P33956"/>
<dbReference type="OrthoDB" id="170622at2157"/>
<dbReference type="PhylomeDB" id="P33956"/>
<dbReference type="Proteomes" id="UP000000554">
    <property type="component" value="Plasmid pNRC200"/>
</dbReference>
<dbReference type="GO" id="GO:0031411">
    <property type="term" value="C:gas vesicle"/>
    <property type="evidence" value="ECO:0007669"/>
    <property type="project" value="UniProtKB-SubCell"/>
</dbReference>
<dbReference type="GO" id="GO:0012506">
    <property type="term" value="C:vesicle membrane"/>
    <property type="evidence" value="ECO:0007669"/>
    <property type="project" value="InterPro"/>
</dbReference>
<dbReference type="GO" id="GO:0005198">
    <property type="term" value="F:structural molecule activity"/>
    <property type="evidence" value="ECO:0007669"/>
    <property type="project" value="InterPro"/>
</dbReference>
<dbReference type="InterPro" id="IPR000638">
    <property type="entry name" value="Gas-vesicle_GvpA-like"/>
</dbReference>
<dbReference type="InterPro" id="IPR050530">
    <property type="entry name" value="GvpA"/>
</dbReference>
<dbReference type="InterPro" id="IPR018493">
    <property type="entry name" value="GvpA-like_CS"/>
</dbReference>
<dbReference type="NCBIfam" id="NF046090">
    <property type="entry name" value="halo_gas_GvpJ"/>
    <property type="match status" value="1"/>
</dbReference>
<dbReference type="PANTHER" id="PTHR35344:SF4">
    <property type="entry name" value="GAS VESICLE PROTEIN A1"/>
    <property type="match status" value="1"/>
</dbReference>
<dbReference type="PANTHER" id="PTHR35344">
    <property type="entry name" value="GAS VESICLE STRUCTURAL PROTEIN 2-RELATED"/>
    <property type="match status" value="1"/>
</dbReference>
<dbReference type="Pfam" id="PF00741">
    <property type="entry name" value="Gas_vesicle"/>
    <property type="match status" value="1"/>
</dbReference>
<dbReference type="PROSITE" id="PS00234">
    <property type="entry name" value="GAS_VESICLE_A_1"/>
    <property type="match status" value="1"/>
</dbReference>
<dbReference type="PROSITE" id="PS00669">
    <property type="entry name" value="GAS_VESICLE_A_2"/>
    <property type="match status" value="1"/>
</dbReference>
<gene>
    <name evidence="11" type="primary">gvpJ2</name>
    <name evidence="8" type="synonym">c-gvpJ</name>
    <name evidence="11" type="ordered locus">VNG_6232G</name>
</gene>
<accession>P33956</accession>
<accession>Q9HHT8</accession>
<feature type="chain" id="PRO_0000200004" description="Gas vesicle protein J2">
    <location>
        <begin position="1"/>
        <end position="98"/>
    </location>
</feature>
<feature type="region of interest" description="Disordered" evidence="2">
    <location>
        <begin position="75"/>
        <end position="98"/>
    </location>
</feature>
<feature type="compositionally biased region" description="Basic and acidic residues" evidence="2">
    <location>
        <begin position="80"/>
        <end position="90"/>
    </location>
</feature>
<geneLocation type="plasmid">
    <name>pNRC200</name>
</geneLocation>
<keyword id="KW-0903">Direct protein sequencing</keyword>
<keyword id="KW-0304">Gas vesicle</keyword>
<keyword id="KW-0614">Plasmid</keyword>
<keyword id="KW-1185">Reference proteome</keyword>
<reference key="1">
    <citation type="journal article" date="1992" name="J. Mol. Biol.">
        <title>Three different but related gene clusters encoding gas vesicles in halophilic archaea.</title>
        <authorList>
            <person name="Englert C."/>
            <person name="Krueger K."/>
            <person name="Offner S."/>
            <person name="Pfeifer F."/>
        </authorList>
    </citation>
    <scope>NUCLEOTIDE SEQUENCE [GENOMIC DNA]</scope>
    <scope>GAS VESICLE GENE CLUSTER</scope>
    <source>
        <strain>NRC-817</strain>
    </source>
</reference>
<reference evidence="12" key="2">
    <citation type="journal article" date="1996" name="J. Bacteriol.">
        <title>Transcript analysis of the c-vac region and differential synthesis of the two regulatory gas vesicle proteins GvpD and GvpE in Halobacterium salinarium PHH4.</title>
        <authorList>
            <person name="Krueger K."/>
            <person name="Pfeifer F."/>
        </authorList>
    </citation>
    <scope>NUCLEOTIDE SEQUENCE [GENOMIC DNA]</scope>
    <scope>INDUCTION</scope>
    <source>
        <strain>PHH1 /PHH4</strain>
    </source>
</reference>
<reference evidence="11" key="3">
    <citation type="journal article" date="2000" name="Proc. Natl. Acad. Sci. U.S.A.">
        <title>Genome sequence of Halobacterium species NRC-1.</title>
        <authorList>
            <person name="Ng W.V."/>
            <person name="Kennedy S.P."/>
            <person name="Mahairas G.G."/>
            <person name="Berquist B."/>
            <person name="Pan M."/>
            <person name="Shukla H.D."/>
            <person name="Lasky S.R."/>
            <person name="Baliga N.S."/>
            <person name="Thorsson V."/>
            <person name="Sbrogna J."/>
            <person name="Swartzell S."/>
            <person name="Weir D."/>
            <person name="Hall J."/>
            <person name="Dahl T.A."/>
            <person name="Welti R."/>
            <person name="Goo Y.A."/>
            <person name="Leithauser B."/>
            <person name="Keller K."/>
            <person name="Cruz R."/>
            <person name="Danson M.J."/>
            <person name="Hough D.W."/>
            <person name="Maddocks D.G."/>
            <person name="Jablonski P.E."/>
            <person name="Krebs M.P."/>
            <person name="Angevine C.M."/>
            <person name="Dale H."/>
            <person name="Isenbarger T.A."/>
            <person name="Peck R.F."/>
            <person name="Pohlschroder M."/>
            <person name="Spudich J.L."/>
            <person name="Jung K.-H."/>
            <person name="Alam M."/>
            <person name="Freitas T."/>
            <person name="Hou S."/>
            <person name="Daniels C.J."/>
            <person name="Dennis P.P."/>
            <person name="Omer A.D."/>
            <person name="Ebhardt H."/>
            <person name="Lowe T.M."/>
            <person name="Liang P."/>
            <person name="Riley M."/>
            <person name="Hood L."/>
            <person name="DasSarma S."/>
        </authorList>
    </citation>
    <scope>NUCLEOTIDE SEQUENCE [LARGE SCALE GENOMIC DNA]</scope>
    <source>
        <strain>ATCC 700922 / JCM 11081 / NRC-1</strain>
        <plasmid>pNRC200</plasmid>
    </source>
</reference>
<reference key="4">
    <citation type="journal article" date="2011" name="J. Proteome Res.">
        <title>New structural proteins of Halobacterium salinarum gas vesicle revealed by comparative proteomics analysis.</title>
        <authorList>
            <person name="Chu L.J."/>
            <person name="Chen M.C."/>
            <person name="Setter J."/>
            <person name="Tsai Y.S."/>
            <person name="Yang H."/>
            <person name="Fang X."/>
            <person name="Ting Y.S."/>
            <person name="Shaffer S.A."/>
            <person name="Taylor G.K."/>
            <person name="von Haller P.D."/>
            <person name="Goodlett D.R."/>
            <person name="Ng W.V."/>
        </authorList>
    </citation>
    <scope>PROTEIN SEQUENCE OF 47-58 AND 84-98</scope>
    <scope>SUBCELLULAR LOCATION</scope>
    <scope>IDENTIFICATION BY MASS SPECTROMETRY</scope>
    <source>
        <strain>ATCC 700922 / JCM 11081 / NRC-1</strain>
    </source>
</reference>
<reference key="5">
    <citation type="journal article" date="1997" name="Microbiology">
        <title>Growth competition between Halobacterium salinarium strain PHH1 and mutants affected in gas vesicle synthesis.</title>
        <authorList>
            <person name="Beard S.J."/>
            <person name="Hayes P.K."/>
            <person name="Walsby A.E."/>
        </authorList>
    </citation>
    <scope>FUNCTION IN BUOYANCY</scope>
    <scope>POSSIBLE INDUCTION BY OXYGEN LIMITATION</scope>
    <source>
        <strain>PHH1</strain>
    </source>
</reference>
<reference key="6">
    <citation type="journal article" date="1998" name="Microbiology">
        <title>Structural characteristics of halobacterial gas vesicles.</title>
        <authorList>
            <person name="Offner S."/>
            <person name="Ziese U."/>
            <person name="Wanner G."/>
            <person name="Typke D."/>
            <person name="Pfeifer F."/>
        </authorList>
    </citation>
    <scope>FUNCTION</scope>
    <source>
        <strain>PHH1</strain>
    </source>
</reference>
<evidence type="ECO:0000250" key="1">
    <source>
        <dbReference type="UniProtKB" id="P24374"/>
    </source>
</evidence>
<evidence type="ECO:0000256" key="2">
    <source>
        <dbReference type="SAM" id="MobiDB-lite"/>
    </source>
</evidence>
<evidence type="ECO:0000269" key="3">
    <source>
    </source>
</evidence>
<evidence type="ECO:0000269" key="4">
    <source>
    </source>
</evidence>
<evidence type="ECO:0000269" key="5">
    <source>
    </source>
</evidence>
<evidence type="ECO:0000269" key="6">
    <source>
    </source>
</evidence>
<evidence type="ECO:0000269" key="7">
    <source>
    </source>
</evidence>
<evidence type="ECO:0000303" key="8">
    <source>
    </source>
</evidence>
<evidence type="ECO:0000303" key="9">
    <source>
    </source>
</evidence>
<evidence type="ECO:0000305" key="10"/>
<evidence type="ECO:0000312" key="11">
    <source>
        <dbReference type="EMBL" id="AAG20888.1"/>
    </source>
</evidence>
<evidence type="ECO:0000312" key="12">
    <source>
        <dbReference type="EMBL" id="CAA64349.1"/>
    </source>
</evidence>
<name>GVPJ2_HALSA</name>